<proteinExistence type="inferred from homology"/>
<name>SYG_CHLMU</name>
<feature type="chain" id="PRO_0000072888" description="Glycine--tRNA ligase">
    <location>
        <begin position="1"/>
        <end position="1003"/>
    </location>
</feature>
<feature type="region of interest" description="Glycine--tRNA ligase alpha subunit">
    <location>
        <begin position="1"/>
        <end position="310"/>
    </location>
</feature>
<feature type="region of interest" description="Glycine--tRNA ligase beta subunit">
    <location>
        <begin position="311"/>
        <end position="1003"/>
    </location>
</feature>
<keyword id="KW-0030">Aminoacyl-tRNA synthetase</keyword>
<keyword id="KW-0067">ATP-binding</keyword>
<keyword id="KW-0963">Cytoplasm</keyword>
<keyword id="KW-0436">Ligase</keyword>
<keyword id="KW-0547">Nucleotide-binding</keyword>
<keyword id="KW-0648">Protein biosynthesis</keyword>
<accession>Q9PLC6</accession>
<gene>
    <name type="primary">glyQS</name>
    <name type="synonym">glyS</name>
    <name type="ordered locus">TC_0178</name>
</gene>
<comment type="catalytic activity">
    <reaction>
        <text>tRNA(Gly) + glycine + ATP = glycyl-tRNA(Gly) + AMP + diphosphate</text>
        <dbReference type="Rhea" id="RHEA:16013"/>
        <dbReference type="Rhea" id="RHEA-COMP:9664"/>
        <dbReference type="Rhea" id="RHEA-COMP:9683"/>
        <dbReference type="ChEBI" id="CHEBI:30616"/>
        <dbReference type="ChEBI" id="CHEBI:33019"/>
        <dbReference type="ChEBI" id="CHEBI:57305"/>
        <dbReference type="ChEBI" id="CHEBI:78442"/>
        <dbReference type="ChEBI" id="CHEBI:78522"/>
        <dbReference type="ChEBI" id="CHEBI:456215"/>
        <dbReference type="EC" id="6.1.1.14"/>
    </reaction>
</comment>
<comment type="subcellular location">
    <subcellularLocation>
        <location evidence="1">Cytoplasm</location>
    </subcellularLocation>
</comment>
<comment type="similarity">
    <text evidence="2">Belongs to the class-II aminoacyl-tRNA synthetase family.</text>
</comment>
<reference key="1">
    <citation type="journal article" date="2000" name="Nucleic Acids Res.">
        <title>Genome sequences of Chlamydia trachomatis MoPn and Chlamydia pneumoniae AR39.</title>
        <authorList>
            <person name="Read T.D."/>
            <person name="Brunham R.C."/>
            <person name="Shen C."/>
            <person name="Gill S.R."/>
            <person name="Heidelberg J.F."/>
            <person name="White O."/>
            <person name="Hickey E.K."/>
            <person name="Peterson J.D."/>
            <person name="Utterback T.R."/>
            <person name="Berry K.J."/>
            <person name="Bass S."/>
            <person name="Linher K.D."/>
            <person name="Weidman J.F."/>
            <person name="Khouri H.M."/>
            <person name="Craven B."/>
            <person name="Bowman C."/>
            <person name="Dodson R.J."/>
            <person name="Gwinn M.L."/>
            <person name="Nelson W.C."/>
            <person name="DeBoy R.T."/>
            <person name="Kolonay J.F."/>
            <person name="McClarty G."/>
            <person name="Salzberg S.L."/>
            <person name="Eisen J.A."/>
            <person name="Fraser C.M."/>
        </authorList>
    </citation>
    <scope>NUCLEOTIDE SEQUENCE [LARGE SCALE GENOMIC DNA]</scope>
    <source>
        <strain>MoPn / Nigg</strain>
    </source>
</reference>
<dbReference type="EC" id="6.1.1.14"/>
<dbReference type="EMBL" id="AE002160">
    <property type="protein sequence ID" value="AAF39052.1"/>
    <property type="molecule type" value="Genomic_DNA"/>
</dbReference>
<dbReference type="PIR" id="F81731">
    <property type="entry name" value="F81731"/>
</dbReference>
<dbReference type="RefSeq" id="WP_010229721.1">
    <property type="nucleotide sequence ID" value="NZ_CP063055.1"/>
</dbReference>
<dbReference type="SMR" id="Q9PLC6"/>
<dbReference type="GeneID" id="1246303"/>
<dbReference type="KEGG" id="cmu:TC_0178"/>
<dbReference type="eggNOG" id="COG0751">
    <property type="taxonomic scope" value="Bacteria"/>
</dbReference>
<dbReference type="eggNOG" id="COG0752">
    <property type="taxonomic scope" value="Bacteria"/>
</dbReference>
<dbReference type="HOGENOM" id="CLU_007220_0_0_0"/>
<dbReference type="OrthoDB" id="9775440at2"/>
<dbReference type="Proteomes" id="UP000000800">
    <property type="component" value="Chromosome"/>
</dbReference>
<dbReference type="GO" id="GO:0005829">
    <property type="term" value="C:cytosol"/>
    <property type="evidence" value="ECO:0007669"/>
    <property type="project" value="TreeGrafter"/>
</dbReference>
<dbReference type="GO" id="GO:0004814">
    <property type="term" value="F:arginine-tRNA ligase activity"/>
    <property type="evidence" value="ECO:0007669"/>
    <property type="project" value="InterPro"/>
</dbReference>
<dbReference type="GO" id="GO:0005524">
    <property type="term" value="F:ATP binding"/>
    <property type="evidence" value="ECO:0007669"/>
    <property type="project" value="UniProtKB-UniRule"/>
</dbReference>
<dbReference type="GO" id="GO:0004820">
    <property type="term" value="F:glycine-tRNA ligase activity"/>
    <property type="evidence" value="ECO:0000250"/>
    <property type="project" value="UniProtKB"/>
</dbReference>
<dbReference type="GO" id="GO:0046983">
    <property type="term" value="F:protein dimerization activity"/>
    <property type="evidence" value="ECO:0000250"/>
    <property type="project" value="UniProtKB"/>
</dbReference>
<dbReference type="GO" id="GO:0006420">
    <property type="term" value="P:arginyl-tRNA aminoacylation"/>
    <property type="evidence" value="ECO:0007669"/>
    <property type="project" value="InterPro"/>
</dbReference>
<dbReference type="GO" id="GO:0006426">
    <property type="term" value="P:glycyl-tRNA aminoacylation"/>
    <property type="evidence" value="ECO:0007669"/>
    <property type="project" value="UniProtKB-UniRule"/>
</dbReference>
<dbReference type="CDD" id="cd00733">
    <property type="entry name" value="GlyRS_alpha_core"/>
    <property type="match status" value="1"/>
</dbReference>
<dbReference type="FunFam" id="3.30.930.10:FF:000006">
    <property type="entry name" value="Glycine--tRNA ligase alpha subunit"/>
    <property type="match status" value="1"/>
</dbReference>
<dbReference type="Gene3D" id="3.30.930.10">
    <property type="entry name" value="Bira Bifunctional Protein, Domain 2"/>
    <property type="match status" value="1"/>
</dbReference>
<dbReference type="Gene3D" id="1.20.58.180">
    <property type="entry name" value="Class II aaRS and biotin synthetases, domain 2"/>
    <property type="match status" value="1"/>
</dbReference>
<dbReference type="HAMAP" id="MF_00254">
    <property type="entry name" value="Gly_tRNA_synth_alpha"/>
    <property type="match status" value="1"/>
</dbReference>
<dbReference type="HAMAP" id="MF_00255">
    <property type="entry name" value="Gly_tRNA_synth_beta"/>
    <property type="match status" value="1"/>
</dbReference>
<dbReference type="InterPro" id="IPR045864">
    <property type="entry name" value="aa-tRNA-synth_II/BPL/LPL"/>
</dbReference>
<dbReference type="InterPro" id="IPR008909">
    <property type="entry name" value="DALR_anticod-bd"/>
</dbReference>
<dbReference type="InterPro" id="IPR015944">
    <property type="entry name" value="Gly-tRNA-synth_bsu"/>
</dbReference>
<dbReference type="InterPro" id="IPR006194">
    <property type="entry name" value="Gly-tRNA-synth_heterodimer"/>
</dbReference>
<dbReference type="InterPro" id="IPR002310">
    <property type="entry name" value="Gly-tRNA_ligase_asu"/>
</dbReference>
<dbReference type="NCBIfam" id="TIGR00388">
    <property type="entry name" value="glyQ"/>
    <property type="match status" value="1"/>
</dbReference>
<dbReference type="NCBIfam" id="TIGR00211">
    <property type="entry name" value="glyS"/>
    <property type="match status" value="1"/>
</dbReference>
<dbReference type="NCBIfam" id="NF006827">
    <property type="entry name" value="PRK09348.1"/>
    <property type="match status" value="1"/>
</dbReference>
<dbReference type="NCBIfam" id="NF011499">
    <property type="entry name" value="PRK14908.1"/>
    <property type="match status" value="1"/>
</dbReference>
<dbReference type="PANTHER" id="PTHR30075:SF2">
    <property type="entry name" value="GLYCINE--TRNA LIGASE, CHLOROPLASTIC_MITOCHONDRIAL 2"/>
    <property type="match status" value="1"/>
</dbReference>
<dbReference type="PANTHER" id="PTHR30075">
    <property type="entry name" value="GLYCYL-TRNA SYNTHETASE"/>
    <property type="match status" value="1"/>
</dbReference>
<dbReference type="Pfam" id="PF05746">
    <property type="entry name" value="DALR_1"/>
    <property type="match status" value="1"/>
</dbReference>
<dbReference type="Pfam" id="PF02091">
    <property type="entry name" value="tRNA-synt_2e"/>
    <property type="match status" value="1"/>
</dbReference>
<dbReference type="Pfam" id="PF02092">
    <property type="entry name" value="tRNA_synt_2f"/>
    <property type="match status" value="1"/>
</dbReference>
<dbReference type="PRINTS" id="PR01044">
    <property type="entry name" value="TRNASYNTHGA"/>
</dbReference>
<dbReference type="SUPFAM" id="SSF55681">
    <property type="entry name" value="Class II aaRS and biotin synthetases"/>
    <property type="match status" value="1"/>
</dbReference>
<dbReference type="PROSITE" id="PS50861">
    <property type="entry name" value="AA_TRNA_LIGASE_II_GLYAB"/>
    <property type="match status" value="2"/>
</dbReference>
<protein>
    <recommendedName>
        <fullName>Glycine--tRNA ligase</fullName>
    </recommendedName>
    <alternativeName>
        <fullName>Glycyl-tRNA synthetase</fullName>
        <shortName>GlyRS</shortName>
        <ecNumber>6.1.1.14</ecNumber>
    </alternativeName>
    <domain>
        <recommendedName>
            <fullName>Glycine--tRNA ligase alpha subunit</fullName>
        </recommendedName>
        <alternativeName>
            <fullName>Glycyl-tRNA synthetase alpha subunit</fullName>
        </alternativeName>
    </domain>
    <domain>
        <recommendedName>
            <fullName>Glycine--tRNA ligase beta subunit</fullName>
        </recommendedName>
        <alternativeName>
            <fullName>Glycyl-tRNA synthetase beta subunit</fullName>
        </alternativeName>
    </domain>
</protein>
<organism>
    <name type="scientific">Chlamydia muridarum (strain MoPn / Nigg)</name>
    <dbReference type="NCBI Taxonomy" id="243161"/>
    <lineage>
        <taxon>Bacteria</taxon>
        <taxon>Pseudomonadati</taxon>
        <taxon>Chlamydiota</taxon>
        <taxon>Chlamydiia</taxon>
        <taxon>Chlamydiales</taxon>
        <taxon>Chlamydiaceae</taxon>
        <taxon>Chlamydia/Chlamydophila group</taxon>
        <taxon>Chlamydia</taxon>
    </lineage>
</organism>
<evidence type="ECO:0000250" key="1"/>
<evidence type="ECO:0000305" key="2"/>
<sequence>MSSQPLTLQDMMAAILRFWSEQGCIIHQGYDLEVGAGTFNPATFLQALGPEPFKTAYIEPSRRPQDGRYGQHPNRLQKYHQLQVILKPVPENFLSLYLESLKVIGLNLVDHDIRFVHDDWENPTIGAWGLGWEVWLNGMEITQLTYFQAVGSKPLEAISGEITYGVERIAMYLQKKNSVYDVMWNDSLTYGDITQHAEQAWSQYNFETANTSMWLKHFEDFAAEALATLDKGLPLPAYDFVIKASHAFNMLDSRGVISVTERTRYITKIRQLARAVADKYVIWRESLGFPLLKTIPSTPTVTAKQIPHICQDEDFLLEIGSEELPAAFVPTGIQQLESLAKKLLADHNISYNNLEVLGTPRRLALRIQGLSHLTIRPEAEKKGPPLSLLFEEDGSVSSQGEQFFASHGLSISHRSALDQSSTICRVRSIKGTDYLFLVIPEERIETAAILVNELPLLIRSMRFPKKMTWDNGGVEYARPIRWLVALYGDQVLPISLGFVSSGNISWGHRQLDNRQLTIPSSKEYIDILRDACVIVSQKERRSIIEQGLQNLTGDQTVAIAPEHLIEETVFLTEHPFVICAQFNPDFCSLPKELLIAEMINHQRYFPTQNLQGEITNRFLIVCDNSPTDTIIEGNEKALAPRLTDGNFLFKQDLLTSLDSFVEKLKSVTYFDALGSLADKTARLKLHLEETYPLLPLCPKEDIDTAVHYCKADLVSAVVNEFPELQGIMGRYYLQNAALSKAAAIAVGEHLQHITLGSSVSTTGALLSILDRVDNLLSCFILGLLPTSSHDPYALRRQSLELLTLLYTTQSSVDIEDLFSRLVRHFPTTIPNTVWSPEDVLNKLCSFVWGRLKTILSSLGFAKEVIAAVLTENCPKNPLTIINSARSIQELQNTQTLETIASTHNRLKKILASLSFSVTEQIFSLITSEDMLFKQALERFKEATTSLPISSREYLLQLEDLSQSTALFLDSVRIADDDENIRNQRIALLVATQKCFGFYAWDAL</sequence>